<name>ERD22_CHICK</name>
<gene>
    <name type="primary">KDELR2</name>
    <name type="ORF">RCJMB04_8l23</name>
</gene>
<sequence>MNIFRLTGDLSHLAAIIILLLKIWKSRSCAGISGKSQLLFALVFTTRYLDLFTSFISLYNTSMKLIYIACSYATVYLIYMKFKATYDGNHDTFRVEFLIVPVGGLSFLVNHDFSPLEILWTFSIYLESVAILPQLFMISKTGEAETITTHYLFFLGLYRALYLVNWIWRYYFEGFFDLIAVVAGVVQTVLYCDFFYLYVTKVLKGKKLSLPA</sequence>
<keyword id="KW-0002">3D-structure</keyword>
<keyword id="KW-0968">Cytoplasmic vesicle</keyword>
<keyword id="KW-0256">Endoplasmic reticulum</keyword>
<keyword id="KW-0931">ER-Golgi transport</keyword>
<keyword id="KW-0333">Golgi apparatus</keyword>
<keyword id="KW-0472">Membrane</keyword>
<keyword id="KW-0653">Protein transport</keyword>
<keyword id="KW-0675">Receptor</keyword>
<keyword id="KW-1185">Reference proteome</keyword>
<keyword id="KW-0812">Transmembrane</keyword>
<keyword id="KW-1133">Transmembrane helix</keyword>
<keyword id="KW-0813">Transport</keyword>
<dbReference type="EMBL" id="AJ719955">
    <property type="protein sequence ID" value="CAG31614.1"/>
    <property type="molecule type" value="mRNA"/>
</dbReference>
<dbReference type="RefSeq" id="NP_001153187.1">
    <property type="nucleotide sequence ID" value="NM_001159715.2"/>
</dbReference>
<dbReference type="PDB" id="6I6B">
    <property type="method" value="X-ray"/>
    <property type="resolution" value="2.59 A"/>
    <property type="chains" value="A=1-203"/>
</dbReference>
<dbReference type="PDB" id="6I6H">
    <property type="method" value="X-ray"/>
    <property type="resolution" value="2.00 A"/>
    <property type="chains" value="A=1-207"/>
</dbReference>
<dbReference type="PDB" id="6I6J">
    <property type="method" value="X-ray"/>
    <property type="resolution" value="2.23 A"/>
    <property type="chains" value="A=1-204"/>
</dbReference>
<dbReference type="PDB" id="6Y7V">
    <property type="method" value="X-ray"/>
    <property type="resolution" value="2.24 A"/>
    <property type="chains" value="A=1-212"/>
</dbReference>
<dbReference type="PDB" id="6ZXR">
    <property type="method" value="X-ray"/>
    <property type="resolution" value="2.31 A"/>
    <property type="chains" value="A=1-212"/>
</dbReference>
<dbReference type="PDB" id="7OXE">
    <property type="method" value="X-ray"/>
    <property type="resolution" value="2.28 A"/>
    <property type="chains" value="A=1-212"/>
</dbReference>
<dbReference type="PDB" id="7OYE">
    <property type="method" value="X-ray"/>
    <property type="resolution" value="2.62 A"/>
    <property type="chains" value="A=1-212"/>
</dbReference>
<dbReference type="PDB" id="7RXC">
    <property type="method" value="EM"/>
    <property type="resolution" value="3.20 A"/>
    <property type="chains" value="K=1-212"/>
</dbReference>
<dbReference type="PDB" id="8APY">
    <property type="method" value="X-ray"/>
    <property type="resolution" value="2.34 A"/>
    <property type="chains" value="A=1-212"/>
</dbReference>
<dbReference type="PDBsum" id="6I6B"/>
<dbReference type="PDBsum" id="6I6H"/>
<dbReference type="PDBsum" id="6I6J"/>
<dbReference type="PDBsum" id="6Y7V"/>
<dbReference type="PDBsum" id="6ZXR"/>
<dbReference type="PDBsum" id="7OXE"/>
<dbReference type="PDBsum" id="7OYE"/>
<dbReference type="PDBsum" id="7RXC"/>
<dbReference type="PDBsum" id="8APY"/>
<dbReference type="EMDB" id="EMD-24728"/>
<dbReference type="SMR" id="Q5ZKX9"/>
<dbReference type="FunCoup" id="Q5ZKX9">
    <property type="interactions" value="1377"/>
</dbReference>
<dbReference type="STRING" id="9031.ENSGALP00000045653"/>
<dbReference type="TCDB" id="9.B.191.1.8">
    <property type="family name" value="the endoplasmic reticulum retention receptor (kdelr) family"/>
</dbReference>
<dbReference type="PaxDb" id="9031-ENSGALP00000011467"/>
<dbReference type="ABCD" id="Q5ZKX9">
    <property type="antibodies" value="1 sequenced antibody"/>
</dbReference>
<dbReference type="GeneID" id="771927"/>
<dbReference type="KEGG" id="gga:771927"/>
<dbReference type="CTD" id="11014"/>
<dbReference type="VEuPathDB" id="HostDB:geneid_771927"/>
<dbReference type="eggNOG" id="KOG3106">
    <property type="taxonomic scope" value="Eukaryota"/>
</dbReference>
<dbReference type="InParanoid" id="Q5ZKX9"/>
<dbReference type="OMA" id="WKSRSCE"/>
<dbReference type="OrthoDB" id="7694678at2759"/>
<dbReference type="PhylomeDB" id="Q5ZKX9"/>
<dbReference type="Reactome" id="R-GGA-6807878">
    <property type="pathway name" value="COPI-mediated anterograde transport"/>
</dbReference>
<dbReference type="Reactome" id="R-GGA-6811434">
    <property type="pathway name" value="COPI-dependent Golgi-to-ER retrograde traffic"/>
</dbReference>
<dbReference type="PRO" id="PR:Q5ZKX9"/>
<dbReference type="Proteomes" id="UP000000539">
    <property type="component" value="Chromosome 14"/>
</dbReference>
<dbReference type="Bgee" id="ENSGALG00000040793">
    <property type="expression patterns" value="Expressed in colon and 13 other cell types or tissues"/>
</dbReference>
<dbReference type="GO" id="GO:0005801">
    <property type="term" value="C:cis-Golgi network"/>
    <property type="evidence" value="ECO:0000318"/>
    <property type="project" value="GO_Central"/>
</dbReference>
<dbReference type="GO" id="GO:0030663">
    <property type="term" value="C:COPI-coated vesicle membrane"/>
    <property type="evidence" value="ECO:0007669"/>
    <property type="project" value="UniProtKB-SubCell"/>
</dbReference>
<dbReference type="GO" id="GO:0005783">
    <property type="term" value="C:endoplasmic reticulum"/>
    <property type="evidence" value="ECO:0000318"/>
    <property type="project" value="GO_Central"/>
</dbReference>
<dbReference type="GO" id="GO:0005789">
    <property type="term" value="C:endoplasmic reticulum membrane"/>
    <property type="evidence" value="ECO:0000250"/>
    <property type="project" value="UniProtKB"/>
</dbReference>
<dbReference type="GO" id="GO:0000139">
    <property type="term" value="C:Golgi membrane"/>
    <property type="evidence" value="ECO:0000250"/>
    <property type="project" value="UniProtKB"/>
</dbReference>
<dbReference type="GO" id="GO:0016020">
    <property type="term" value="C:membrane"/>
    <property type="evidence" value="ECO:0000314"/>
    <property type="project" value="UniProtKB"/>
</dbReference>
<dbReference type="GO" id="GO:0046923">
    <property type="term" value="F:ER retention sequence binding"/>
    <property type="evidence" value="ECO:0000318"/>
    <property type="project" value="GO_Central"/>
</dbReference>
<dbReference type="GO" id="GO:0005046">
    <property type="term" value="F:KDEL sequence binding"/>
    <property type="evidence" value="ECO:0000314"/>
    <property type="project" value="UniProtKB"/>
</dbReference>
<dbReference type="GO" id="GO:0035437">
    <property type="term" value="P:maintenance of protein localization in endoplasmic reticulum"/>
    <property type="evidence" value="ECO:0000250"/>
    <property type="project" value="UniProtKB"/>
</dbReference>
<dbReference type="GO" id="GO:0006621">
    <property type="term" value="P:protein retention in ER lumen"/>
    <property type="evidence" value="ECO:0000318"/>
    <property type="project" value="GO_Central"/>
</dbReference>
<dbReference type="GO" id="GO:0015031">
    <property type="term" value="P:protein transport"/>
    <property type="evidence" value="ECO:0007669"/>
    <property type="project" value="UniProtKB-KW"/>
</dbReference>
<dbReference type="GO" id="GO:0006890">
    <property type="term" value="P:retrograde vesicle-mediated transport, Golgi to endoplasmic reticulum"/>
    <property type="evidence" value="ECO:0000250"/>
    <property type="project" value="UniProtKB"/>
</dbReference>
<dbReference type="InterPro" id="IPR000133">
    <property type="entry name" value="ER_ret_rcpt"/>
</dbReference>
<dbReference type="PANTHER" id="PTHR10585">
    <property type="entry name" value="ER LUMEN PROTEIN RETAINING RECEPTOR"/>
    <property type="match status" value="1"/>
</dbReference>
<dbReference type="Pfam" id="PF00810">
    <property type="entry name" value="ER_lumen_recept"/>
    <property type="match status" value="1"/>
</dbReference>
<dbReference type="PRINTS" id="PR00660">
    <property type="entry name" value="ERLUMENR"/>
</dbReference>
<dbReference type="PROSITE" id="PS00951">
    <property type="entry name" value="ER_LUMEN_RECEPTOR_1"/>
    <property type="match status" value="1"/>
</dbReference>
<dbReference type="PROSITE" id="PS00952">
    <property type="entry name" value="ER_LUMEN_RECEPTOR_2"/>
    <property type="match status" value="1"/>
</dbReference>
<protein>
    <recommendedName>
        <fullName>ER lumen protein-retaining receptor 2</fullName>
    </recommendedName>
    <alternativeName>
        <fullName>KDEL endoplasmic reticulum protein retention receptor 2</fullName>
        <shortName>KDEL receptor 2</shortName>
    </alternativeName>
</protein>
<evidence type="ECO:0000250" key="1">
    <source>
        <dbReference type="UniProtKB" id="P24390"/>
    </source>
</evidence>
<evidence type="ECO:0000250" key="2">
    <source>
        <dbReference type="UniProtKB" id="P33947"/>
    </source>
</evidence>
<evidence type="ECO:0000269" key="3">
    <source>
    </source>
</evidence>
<evidence type="ECO:0000305" key="4"/>
<evidence type="ECO:0000305" key="5">
    <source>
    </source>
</evidence>
<evidence type="ECO:0007829" key="6">
    <source>
        <dbReference type="PDB" id="6I6H"/>
    </source>
</evidence>
<comment type="function">
    <text evidence="2 3">Membrane receptor that binds the K-D-E-L sequence motif in the C-terminal part of endoplasmic reticulum resident proteins and maintains their localization in that compartment by participating to their vesicle-mediated recycling back from the Golgi (By similarity). Binding is pH dependent, and is optimal at pH 5-5.4 (PubMed:30846601).</text>
</comment>
<comment type="subcellular location">
    <subcellularLocation>
        <location evidence="2">Endoplasmic reticulum membrane</location>
        <topology evidence="3">Multi-pass membrane protein</topology>
    </subcellularLocation>
    <subcellularLocation>
        <location evidence="2">Golgi apparatus membrane</location>
        <topology evidence="3">Multi-pass membrane protein</topology>
    </subcellularLocation>
    <subcellularLocation>
        <location evidence="2">Cytoplasmic vesicle</location>
        <location evidence="2">COPI-coated vesicle membrane</location>
        <topology evidence="3">Multi-pass membrane protein</topology>
    </subcellularLocation>
    <text evidence="2">Localized in the Golgi in the absence of bound proteins with the sequence motif K-D-E-L. Trafficks back to the endoplasmic reticulum together with cargo proteins containing the sequence motif K-D-E-L.</text>
</comment>
<comment type="domain">
    <text evidence="2 3">Binds the C-terminal sequence motif K-D-E-L in a hydrophilic cavity between the transmembrane domains. This triggers a conformation change that exposes a Lys-rich patch on the cytosolic surface of the protein (PubMed:30846601). This patch mediates recycling from the Golgi to the endoplasmic reticulum, probably via COPI vesicles (By similarity).</text>
</comment>
<comment type="similarity">
    <text evidence="4">Belongs to the ERD2 family.</text>
</comment>
<feature type="chain" id="PRO_0000252348" description="ER lumen protein-retaining receptor 2">
    <location>
        <begin position="1"/>
        <end position="212"/>
    </location>
</feature>
<feature type="topological domain" description="Lumenal" evidence="3">
    <location>
        <begin position="1"/>
        <end position="4"/>
    </location>
</feature>
<feature type="transmembrane region" description="Helical" evidence="3">
    <location>
        <begin position="5"/>
        <end position="24"/>
    </location>
</feature>
<feature type="topological domain" description="Cytoplasmic" evidence="3">
    <location>
        <begin position="25"/>
        <end position="32"/>
    </location>
</feature>
<feature type="transmembrane region" description="Helical" evidence="3">
    <location>
        <begin position="33"/>
        <end position="52"/>
    </location>
</feature>
<feature type="topological domain" description="Lumenal" evidence="3">
    <location>
        <begin position="53"/>
        <end position="58"/>
    </location>
</feature>
<feature type="transmembrane region" description="Helical" evidence="3">
    <location>
        <begin position="59"/>
        <end position="79"/>
    </location>
</feature>
<feature type="topological domain" description="Cytoplasmic" evidence="3">
    <location>
        <begin position="80"/>
        <end position="92"/>
    </location>
</feature>
<feature type="transmembrane region" description="Helical" evidence="3">
    <location>
        <begin position="93"/>
        <end position="110"/>
    </location>
</feature>
<feature type="topological domain" description="Lumenal" evidence="3">
    <location>
        <begin position="111"/>
        <end position="116"/>
    </location>
</feature>
<feature type="transmembrane region" description="Helical" evidence="3">
    <location>
        <begin position="117"/>
        <end position="135"/>
    </location>
</feature>
<feature type="topological domain" description="Cytoplasmic" evidence="3">
    <location>
        <begin position="136"/>
        <end position="149"/>
    </location>
</feature>
<feature type="transmembrane region" description="Helical" evidence="3">
    <location>
        <begin position="150"/>
        <end position="168"/>
    </location>
</feature>
<feature type="topological domain" description="Lumenal" evidence="3">
    <location>
        <begin position="169"/>
        <end position="178"/>
    </location>
</feature>
<feature type="transmembrane region" description="Helical" evidence="3">
    <location>
        <begin position="179"/>
        <end position="199"/>
    </location>
</feature>
<feature type="topological domain" description="Cytoplasmic" evidence="3">
    <location>
        <begin position="200"/>
        <end position="212"/>
    </location>
</feature>
<feature type="region of interest" description="Interaction with the K-D-E-L motif on target proteins" evidence="3">
    <location>
        <begin position="47"/>
        <end position="48"/>
    </location>
</feature>
<feature type="region of interest" description="Interaction with the K-D-E-L motif on target proteins" evidence="3">
    <location>
        <begin position="159"/>
        <end position="169"/>
    </location>
</feature>
<feature type="region of interest" description="Important for recycling of cargo proteins with the sequence motif K-D-E-L from the Golgi to the endoplasmic reticulum" evidence="5">
    <location>
        <begin position="204"/>
        <end position="207"/>
    </location>
</feature>
<feature type="site" description="Interaction with the K-D-E-L motif on target proteins" evidence="3">
    <location>
        <position position="5"/>
    </location>
</feature>
<feature type="site" description="Interaction with the K-D-E-L motif on target proteins" evidence="3">
    <location>
        <position position="54"/>
    </location>
</feature>
<feature type="site" description="Interaction with the K-D-E-L motif on target proteins" evidence="3">
    <location>
        <position position="117"/>
    </location>
</feature>
<feature type="site" description="Important for recycling of cargo proteins with the sequence motif K-D-E-L from the Golgi to the endoplasmic reticulum" evidence="1">
    <location>
        <position position="193"/>
    </location>
</feature>
<feature type="mutagenesis site" description="Loss of binding to the sequence motif K-D-E-L." evidence="3">
    <original>H</original>
    <variation>A</variation>
    <location>
        <position position="12"/>
    </location>
</feature>
<feature type="mutagenesis site" description="Loss of binding to the sequence motif K-D-E-L." evidence="3">
    <original>R</original>
    <variation>K</variation>
    <location>
        <position position="47"/>
    </location>
</feature>
<feature type="mutagenesis site" description="Loss of binding to the sequence motif K-D-E-L." evidence="3">
    <original>E</original>
    <variation>A</variation>
    <variation>Q</variation>
    <location>
        <position position="127"/>
    </location>
</feature>
<feature type="mutagenesis site" description="Loss of binding to the sequence motif K-D-E-L." evidence="3">
    <original>Y</original>
    <variation>F</variation>
    <location>
        <position position="158"/>
    </location>
</feature>
<feature type="helix" evidence="6">
    <location>
        <begin position="3"/>
        <end position="26"/>
    </location>
</feature>
<feature type="helix" evidence="6">
    <location>
        <begin position="34"/>
        <end position="47"/>
    </location>
</feature>
<feature type="helix" evidence="6">
    <location>
        <begin position="48"/>
        <end position="52"/>
    </location>
</feature>
<feature type="helix" evidence="6">
    <location>
        <begin position="58"/>
        <end position="79"/>
    </location>
</feature>
<feature type="turn" evidence="6">
    <location>
        <begin position="80"/>
        <end position="82"/>
    </location>
</feature>
<feature type="helix" evidence="6">
    <location>
        <begin position="83"/>
        <end position="85"/>
    </location>
</feature>
<feature type="turn" evidence="6">
    <location>
        <begin position="88"/>
        <end position="90"/>
    </location>
</feature>
<feature type="helix" evidence="6">
    <location>
        <begin position="96"/>
        <end position="108"/>
    </location>
</feature>
<feature type="strand" evidence="6">
    <location>
        <begin position="109"/>
        <end position="111"/>
    </location>
</feature>
<feature type="helix" evidence="6">
    <location>
        <begin position="115"/>
        <end position="129"/>
    </location>
</feature>
<feature type="helix" evidence="6">
    <location>
        <begin position="132"/>
        <end position="140"/>
    </location>
</feature>
<feature type="helix" evidence="6">
    <location>
        <begin position="146"/>
        <end position="173"/>
    </location>
</feature>
<feature type="helix" evidence="6">
    <location>
        <begin position="178"/>
        <end position="189"/>
    </location>
</feature>
<feature type="helix" evidence="6">
    <location>
        <begin position="192"/>
        <end position="200"/>
    </location>
</feature>
<feature type="helix" evidence="6">
    <location>
        <begin position="202"/>
        <end position="204"/>
    </location>
</feature>
<reference key="1">
    <citation type="journal article" date="2005" name="Genome Biol.">
        <title>Full-length cDNAs from chicken bursal lymphocytes to facilitate gene function analysis.</title>
        <authorList>
            <person name="Caldwell R.B."/>
            <person name="Kierzek A.M."/>
            <person name="Arakawa H."/>
            <person name="Bezzubov Y."/>
            <person name="Zaim J."/>
            <person name="Fiedler P."/>
            <person name="Kutter S."/>
            <person name="Blagodatski A."/>
            <person name="Kostovska D."/>
            <person name="Koter M."/>
            <person name="Plachy J."/>
            <person name="Carninci P."/>
            <person name="Hayashizaki Y."/>
            <person name="Buerstedde J.-M."/>
        </authorList>
    </citation>
    <scope>NUCLEOTIDE SEQUENCE [LARGE SCALE MRNA]</scope>
    <source>
        <strain>CB</strain>
        <tissue>Bursa of Fabricius</tissue>
    </source>
</reference>
<reference key="2">
    <citation type="journal article" date="2019" name="Science">
        <title>Structural basis for pH-dependent retrieval of ER proteins from the Golgi by the KDEL receptor.</title>
        <authorList>
            <person name="Braeuer P."/>
            <person name="Parker J.L."/>
            <person name="Gerondopoulos A."/>
            <person name="Zimmermann I."/>
            <person name="Seeger M.A."/>
            <person name="Barr F.A."/>
            <person name="Newstead S."/>
        </authorList>
    </citation>
    <scope>X-RAY CRYSTALLOGRAPHY (2.0 ANGSTROMS) OF 1-207 IN COMPLEX WITH KDEL PEPTIDE</scope>
    <scope>FUNCTION</scope>
    <scope>TOPOLOGY</scope>
    <scope>MUTAGENESIS OF HIS-12; ARG-47; GLU-127 AND TYR-158</scope>
</reference>
<proteinExistence type="evidence at protein level"/>
<organism>
    <name type="scientific">Gallus gallus</name>
    <name type="common">Chicken</name>
    <dbReference type="NCBI Taxonomy" id="9031"/>
    <lineage>
        <taxon>Eukaryota</taxon>
        <taxon>Metazoa</taxon>
        <taxon>Chordata</taxon>
        <taxon>Craniata</taxon>
        <taxon>Vertebrata</taxon>
        <taxon>Euteleostomi</taxon>
        <taxon>Archelosauria</taxon>
        <taxon>Archosauria</taxon>
        <taxon>Dinosauria</taxon>
        <taxon>Saurischia</taxon>
        <taxon>Theropoda</taxon>
        <taxon>Coelurosauria</taxon>
        <taxon>Aves</taxon>
        <taxon>Neognathae</taxon>
        <taxon>Galloanserae</taxon>
        <taxon>Galliformes</taxon>
        <taxon>Phasianidae</taxon>
        <taxon>Phasianinae</taxon>
        <taxon>Gallus</taxon>
    </lineage>
</organism>
<accession>Q5ZKX9</accession>